<keyword id="KW-0002">3D-structure</keyword>
<keyword id="KW-0067">ATP-binding</keyword>
<keyword id="KW-1015">Disulfide bond</keyword>
<keyword id="KW-0418">Kinase</keyword>
<keyword id="KW-0547">Nucleotide-binding</keyword>
<keyword id="KW-0784">Thiamine biosynthesis</keyword>
<keyword id="KW-0808">Transferase</keyword>
<evidence type="ECO:0000250" key="1">
    <source>
        <dbReference type="UniProtKB" id="P55882"/>
    </source>
</evidence>
<evidence type="ECO:0000269" key="2">
    <source>
    </source>
</evidence>
<evidence type="ECO:0000303" key="3">
    <source>
    </source>
</evidence>
<evidence type="ECO:0000305" key="4"/>
<evidence type="ECO:0000312" key="5">
    <source>
        <dbReference type="EMBL" id="EJO41888.1"/>
    </source>
</evidence>
<evidence type="ECO:0000312" key="6">
    <source>
        <dbReference type="PDB" id="4YL5"/>
    </source>
</evidence>
<evidence type="ECO:0007744" key="7">
    <source>
        <dbReference type="PDB" id="4YL5"/>
    </source>
</evidence>
<evidence type="ECO:0007744" key="8">
    <source>
        <dbReference type="PDB" id="4YWR"/>
    </source>
</evidence>
<evidence type="ECO:0007829" key="9">
    <source>
        <dbReference type="PDB" id="4YWR"/>
    </source>
</evidence>
<comment type="function">
    <text evidence="2">Catalyzes the phosphorylation of hydroxymethylpyrimidine (HMP) to hydroxymethylpyrimidine phosphate (HMP-P) (PubMed:38306231). Unlike other HMPKs, it cannot catalyze the phosphorylation of HMP-P to generate the diphosphate HMP-PP (PubMed:38306231). Shows no activity with pyridoxal, pyridoxamine or pyridoxine (PubMed:38306231). Does not show phosphatase activity (PubMed:38306231).</text>
</comment>
<comment type="catalytic activity">
    <reaction evidence="2">
        <text>4-amino-5-hydroxymethyl-2-methylpyrimidine + ATP = 4-amino-2-methyl-5-(phosphooxymethyl)pyrimidine + ADP + H(+)</text>
        <dbReference type="Rhea" id="RHEA:23096"/>
        <dbReference type="ChEBI" id="CHEBI:15378"/>
        <dbReference type="ChEBI" id="CHEBI:16892"/>
        <dbReference type="ChEBI" id="CHEBI:30616"/>
        <dbReference type="ChEBI" id="CHEBI:58354"/>
        <dbReference type="ChEBI" id="CHEBI:456216"/>
        <dbReference type="EC" id="2.7.1.49"/>
    </reaction>
    <physiologicalReaction direction="left-to-right" evidence="2">
        <dbReference type="Rhea" id="RHEA:23097"/>
    </physiologicalReaction>
</comment>
<comment type="activity regulation">
    <text evidence="2">Inhibited by pyridoxal phosphate at high micromolar concentrations.</text>
</comment>
<comment type="biophysicochemical properties">
    <kinetics>
        <KM evidence="2">64 uM for HMP</KM>
        <text evidence="2">kcat is 0.19 sec(-1) with HMP as substrate.</text>
    </kinetics>
</comment>
<comment type="pathway">
    <text evidence="4">Cofactor biosynthesis; thiamine diphosphate biosynthesis.</text>
</comment>
<comment type="subunit">
    <text evidence="2">Homodimer.</text>
</comment>
<comment type="PTM">
    <text evidence="2">Crystals show a disulfide bond between Cys-195 and Cys-207 (PubMed:38306231). This disulfide is possibly an artifact of the purification and crystallization conditions (PubMed:38306231). However, as it is adjacent to the conserved GSGC of the oxyanion hole, this disulfide may help to orient the backbone amides toward the oxanion intermediate (PubMed:38306231).</text>
</comment>
<comment type="similarity">
    <text evidence="4">Belongs to the ThiD family.</text>
</comment>
<name>HMPK_ACIB6</name>
<reference key="1">
    <citation type="journal article" date="2015" name="Genome Biol.">
        <title>A novel method of consensus pan-chromosome assembly and large-scale comparative analysis reveal the highly flexible pan-genome of Acinetobacter baumannii.</title>
        <authorList>
            <person name="Chan A.P."/>
            <person name="Sutton G."/>
            <person name="DePew J."/>
            <person name="Krishnakumar R."/>
            <person name="Choi Y."/>
            <person name="Huang X.Z."/>
            <person name="Beck E."/>
            <person name="Harkins D.M."/>
            <person name="Kim M."/>
            <person name="Lesho E.P."/>
            <person name="Nikolich M.P."/>
            <person name="Fouts D.E."/>
        </authorList>
    </citation>
    <scope>NUCLEOTIDE SEQUENCE [LARGE SCALE GENOMIC DNA]</scope>
    <source>
        <strain>IS-123</strain>
    </source>
</reference>
<reference evidence="6 7" key="2">
    <citation type="journal article" date="2024" name="Biochemistry">
        <title>Characterization of an Acinetobacter baumannii Monofunctional Phosphomethylpyrimidine Kinase That Is Inhibited by Pyridoxal Phosphate.</title>
        <authorList>
            <person name="De Vitto H."/>
            <person name="Belfon K.K.J."/>
            <person name="Sharma N."/>
            <person name="Toay S."/>
            <person name="Abendroth J."/>
            <person name="Dranow D.M."/>
            <person name="Lukacs C.M."/>
            <person name="Choi R."/>
            <person name="Udell H.S."/>
            <person name="Willis S."/>
            <person name="Barrera G."/>
            <person name="Beyer O."/>
            <person name="Li T.D."/>
            <person name="Hicks K.A."/>
            <person name="Torelli A.T."/>
            <person name="French J.B."/>
        </authorList>
    </citation>
    <scope>X-RAY CRYSTALLOGRAPHY (1.65 ANGSTROMS) OF 2-255 OF APOPROTEIN AND IN COMPLEX WITH PYRIDOXAL PHOSPHATE</scope>
    <scope>FUNCTION</scope>
    <scope>CATALYTIC ACTIVITY</scope>
    <scope>ACTIVITY REGULATION</scope>
    <scope>BIOPHYSICOCHEMICAL PROPERTIES</scope>
    <scope>SUBUNIT</scope>
    <scope>DISULFIDE BOND</scope>
    <source>
        <strain>IS-123</strain>
    </source>
</reference>
<sequence>MRPTVLCFSGLDPSGGAGLQADIEAIGQSGAHAAIACTALTIQNSQQVFGFEATSKELLLAQANAVVGDLPIKCVKSGMLGTTDNIAALAEFLRAHPDYQYVLDPVLVANSGGSLGDQATLVKAFVELIPLATLITPNTVELRALTGVTDLDQATQKLFEMGAKAVLVKGGHEDTPDFIKNSLYIDGELAASSTCPRLEGEYHGSGCSLASFIAGRLALGDSLKIAVQHAETWLFGVLKNAETPVLNGQKIPKRF</sequence>
<feature type="chain" id="PRO_0000460355" description="Hydroxylmethylpyrimidine kinase">
    <location>
        <begin position="1"/>
        <end position="255"/>
    </location>
</feature>
<feature type="binding site" evidence="2 8">
    <location>
        <position position="18"/>
    </location>
    <ligand>
        <name>pyridoxal 5'-phosphate</name>
        <dbReference type="ChEBI" id="CHEBI:597326"/>
        <note>inhibitor</note>
    </ligand>
</feature>
<feature type="binding site" evidence="1">
    <location>
        <position position="43"/>
    </location>
    <ligand>
        <name>4-amino-5-hydroxymethyl-2-methylpyrimidine</name>
        <dbReference type="ChEBI" id="CHEBI:16892"/>
    </ligand>
</feature>
<feature type="binding site" evidence="2 8">
    <location>
        <position position="43"/>
    </location>
    <ligand>
        <name>pyridoxal 5'-phosphate</name>
        <dbReference type="ChEBI" id="CHEBI:597326"/>
        <note>inhibitor</note>
    </ligand>
</feature>
<feature type="binding site" evidence="2 8">
    <location>
        <position position="110"/>
    </location>
    <ligand>
        <name>pyridoxal 5'-phosphate</name>
        <dbReference type="ChEBI" id="CHEBI:597326"/>
        <note>inhibitor</note>
    </ligand>
</feature>
<feature type="binding site" evidence="2 8">
    <location>
        <position position="208"/>
    </location>
    <ligand>
        <name>pyridoxal 5'-phosphate</name>
        <dbReference type="ChEBI" id="CHEBI:597326"/>
        <note>inhibitor</note>
    </ligand>
</feature>
<feature type="disulfide bond" evidence="2 7 8">
    <location>
        <begin position="195"/>
        <end position="207"/>
    </location>
</feature>
<feature type="strand" evidence="9">
    <location>
        <begin position="4"/>
        <end position="11"/>
    </location>
</feature>
<feature type="strand" evidence="9">
    <location>
        <begin position="15"/>
        <end position="18"/>
    </location>
</feature>
<feature type="helix" evidence="9">
    <location>
        <begin position="19"/>
        <end position="29"/>
    </location>
</feature>
<feature type="strand" evidence="9">
    <location>
        <begin position="31"/>
        <end position="44"/>
    </location>
</feature>
<feature type="strand" evidence="9">
    <location>
        <begin position="47"/>
        <end position="53"/>
    </location>
</feature>
<feature type="helix" evidence="9">
    <location>
        <begin position="56"/>
        <end position="66"/>
    </location>
</feature>
<feature type="turn" evidence="9">
    <location>
        <begin position="67"/>
        <end position="69"/>
    </location>
</feature>
<feature type="strand" evidence="9">
    <location>
        <begin position="72"/>
        <end position="77"/>
    </location>
</feature>
<feature type="helix" evidence="9">
    <location>
        <begin position="83"/>
        <end position="95"/>
    </location>
</feature>
<feature type="strand" evidence="9">
    <location>
        <begin position="99"/>
        <end position="103"/>
    </location>
</feature>
<feature type="strand" evidence="9">
    <location>
        <begin position="114"/>
        <end position="116"/>
    </location>
</feature>
<feature type="helix" evidence="9">
    <location>
        <begin position="118"/>
        <end position="125"/>
    </location>
</feature>
<feature type="turn" evidence="9">
    <location>
        <begin position="126"/>
        <end position="128"/>
    </location>
</feature>
<feature type="helix" evidence="9">
    <location>
        <begin position="129"/>
        <end position="131"/>
    </location>
</feature>
<feature type="strand" evidence="9">
    <location>
        <begin position="133"/>
        <end position="135"/>
    </location>
</feature>
<feature type="helix" evidence="9">
    <location>
        <begin position="139"/>
        <end position="146"/>
    </location>
</feature>
<feature type="helix" evidence="9">
    <location>
        <begin position="151"/>
        <end position="160"/>
    </location>
</feature>
<feature type="strand" evidence="9">
    <location>
        <begin position="164"/>
        <end position="169"/>
    </location>
</feature>
<feature type="strand" evidence="9">
    <location>
        <begin position="176"/>
        <end position="185"/>
    </location>
</feature>
<feature type="strand" evidence="9">
    <location>
        <begin position="188"/>
        <end position="196"/>
    </location>
</feature>
<feature type="helix" evidence="9">
    <location>
        <begin position="210"/>
        <end position="218"/>
    </location>
</feature>
<feature type="helix" evidence="9">
    <location>
        <begin position="223"/>
        <end position="237"/>
    </location>
</feature>
<dbReference type="EC" id="2.7.1.49" evidence="2"/>
<dbReference type="EMBL" id="ALII01000012">
    <property type="protein sequence ID" value="EJO41888.1"/>
    <property type="molecule type" value="Genomic_DNA"/>
</dbReference>
<dbReference type="RefSeq" id="WP_001247938.1">
    <property type="nucleotide sequence ID" value="NZ_ALII01000012.1"/>
</dbReference>
<dbReference type="PDB" id="4YL5">
    <property type="method" value="X-ray"/>
    <property type="resolution" value="1.70 A"/>
    <property type="chains" value="A=2-255"/>
</dbReference>
<dbReference type="PDB" id="4YWR">
    <property type="method" value="X-ray"/>
    <property type="resolution" value="1.65 A"/>
    <property type="chains" value="A=2-255"/>
</dbReference>
<dbReference type="PDBsum" id="4YL5"/>
<dbReference type="PDBsum" id="4YWR"/>
<dbReference type="SMR" id="A0A0J9X285"/>
<dbReference type="UniPathway" id="UPA00060"/>
<dbReference type="EvolutionaryTrace" id="A0A0J9X285"/>
<dbReference type="GO" id="GO:0005829">
    <property type="term" value="C:cytosol"/>
    <property type="evidence" value="ECO:0007669"/>
    <property type="project" value="TreeGrafter"/>
</dbReference>
<dbReference type="GO" id="GO:0005524">
    <property type="term" value="F:ATP binding"/>
    <property type="evidence" value="ECO:0007669"/>
    <property type="project" value="UniProtKB-KW"/>
</dbReference>
<dbReference type="GO" id="GO:0008902">
    <property type="term" value="F:hydroxymethylpyrimidine kinase activity"/>
    <property type="evidence" value="ECO:0007669"/>
    <property type="project" value="TreeGrafter"/>
</dbReference>
<dbReference type="GO" id="GO:0008972">
    <property type="term" value="F:phosphomethylpyrimidine kinase activity"/>
    <property type="evidence" value="ECO:0007669"/>
    <property type="project" value="InterPro"/>
</dbReference>
<dbReference type="GO" id="GO:0009228">
    <property type="term" value="P:thiamine biosynthetic process"/>
    <property type="evidence" value="ECO:0007669"/>
    <property type="project" value="UniProtKB-KW"/>
</dbReference>
<dbReference type="GO" id="GO:0009229">
    <property type="term" value="P:thiamine diphosphate biosynthetic process"/>
    <property type="evidence" value="ECO:0007669"/>
    <property type="project" value="UniProtKB-UniPathway"/>
</dbReference>
<dbReference type="CDD" id="cd01169">
    <property type="entry name" value="HMPP_kinase"/>
    <property type="match status" value="1"/>
</dbReference>
<dbReference type="Gene3D" id="3.40.1190.20">
    <property type="match status" value="1"/>
</dbReference>
<dbReference type="InterPro" id="IPR004399">
    <property type="entry name" value="HMP/HMP-P_kinase_dom"/>
</dbReference>
<dbReference type="InterPro" id="IPR013749">
    <property type="entry name" value="PM/HMP-P_kinase-1"/>
</dbReference>
<dbReference type="InterPro" id="IPR029056">
    <property type="entry name" value="Ribokinase-like"/>
</dbReference>
<dbReference type="PANTHER" id="PTHR20858:SF17">
    <property type="entry name" value="HYDROXYMETHYLPYRIMIDINE_PHOSPHOMETHYLPYRIMIDINE KINASE THI20-RELATED"/>
    <property type="match status" value="1"/>
</dbReference>
<dbReference type="PANTHER" id="PTHR20858">
    <property type="entry name" value="PHOSPHOMETHYLPYRIMIDINE KINASE"/>
    <property type="match status" value="1"/>
</dbReference>
<dbReference type="Pfam" id="PF08543">
    <property type="entry name" value="Phos_pyr_kin"/>
    <property type="match status" value="1"/>
</dbReference>
<dbReference type="SUPFAM" id="SSF53613">
    <property type="entry name" value="Ribokinase-like"/>
    <property type="match status" value="1"/>
</dbReference>
<organism>
    <name type="scientific">Acinetobacter baumannii (strain IS-123)</name>
    <dbReference type="NCBI Taxonomy" id="903899"/>
    <lineage>
        <taxon>Bacteria</taxon>
        <taxon>Pseudomonadati</taxon>
        <taxon>Pseudomonadota</taxon>
        <taxon>Gammaproteobacteria</taxon>
        <taxon>Moraxellales</taxon>
        <taxon>Moraxellaceae</taxon>
        <taxon>Acinetobacter</taxon>
        <taxon>Acinetobacter calcoaceticus/baumannii complex</taxon>
    </lineage>
</organism>
<gene>
    <name evidence="5" type="ORF">ACINIS123_0279</name>
</gene>
<accession>A0A0J9X285</accession>
<accession>A0A140UHE5</accession>
<protein>
    <recommendedName>
        <fullName evidence="3">Hydroxylmethylpyrimidine kinase</fullName>
        <shortName evidence="3">HMP kinase</shortName>
        <shortName evidence="3">HMPK</shortName>
        <ecNumber evidence="2">2.7.1.49</ecNumber>
    </recommendedName>
    <alternativeName>
        <fullName evidence="3">AbHMPK</fullName>
    </alternativeName>
</protein>
<proteinExistence type="evidence at protein level"/>